<comment type="function">
    <text evidence="1">Canalicular ectonucleoside NTPDase responsible for the main hepatic NTPDase activity. Ectonucleoside NTPDases catalyze the hydrolysis of gamma- and beta-phosphate residues of nucleotides, playing a central role in concentration of extracellular nucleotides. Has activity toward ATP, ADP, UTP and UDP, but not toward AMP (By similarity).</text>
</comment>
<comment type="catalytic activity">
    <reaction>
        <text>a ribonucleoside 5'-triphosphate + 2 H2O = a ribonucleoside 5'-phosphate + 2 phosphate + 2 H(+)</text>
        <dbReference type="Rhea" id="RHEA:36795"/>
        <dbReference type="ChEBI" id="CHEBI:15377"/>
        <dbReference type="ChEBI" id="CHEBI:15378"/>
        <dbReference type="ChEBI" id="CHEBI:43474"/>
        <dbReference type="ChEBI" id="CHEBI:58043"/>
        <dbReference type="ChEBI" id="CHEBI:61557"/>
        <dbReference type="EC" id="3.6.1.5"/>
    </reaction>
</comment>
<comment type="cofactor">
    <cofactor evidence="1">
        <name>Ca(2+)</name>
        <dbReference type="ChEBI" id="CHEBI:29108"/>
    </cofactor>
    <cofactor evidence="1">
        <name>Mg(2+)</name>
        <dbReference type="ChEBI" id="CHEBI:18420"/>
    </cofactor>
    <text evidence="1">Ca(2+) or Mg(2+). Has lower efficiency with Mg(2+).</text>
</comment>
<comment type="subcellular location">
    <subcellularLocation>
        <location evidence="1">Cell membrane</location>
        <topology evidence="1">Multi-pass membrane protein</topology>
    </subcellularLocation>
</comment>
<comment type="domain">
    <text evidence="1">The transmembranous domains are involved in regulation of enzyme activity.</text>
</comment>
<comment type="PTM">
    <text evidence="1">N-glycosylated.</text>
</comment>
<comment type="similarity">
    <text evidence="4">Belongs to the GDA1/CD39 NTPase family.</text>
</comment>
<organism>
    <name type="scientific">Bos taurus</name>
    <name type="common">Bovine</name>
    <dbReference type="NCBI Taxonomy" id="9913"/>
    <lineage>
        <taxon>Eukaryota</taxon>
        <taxon>Metazoa</taxon>
        <taxon>Chordata</taxon>
        <taxon>Craniata</taxon>
        <taxon>Vertebrata</taxon>
        <taxon>Euteleostomi</taxon>
        <taxon>Mammalia</taxon>
        <taxon>Eutheria</taxon>
        <taxon>Laurasiatheria</taxon>
        <taxon>Artiodactyla</taxon>
        <taxon>Ruminantia</taxon>
        <taxon>Pecora</taxon>
        <taxon>Bovidae</taxon>
        <taxon>Bovinae</taxon>
        <taxon>Bos</taxon>
    </lineage>
</organism>
<proteinExistence type="evidence at transcript level"/>
<gene>
    <name type="primary">ENTPD8</name>
</gene>
<feature type="chain" id="PRO_0000306881" description="Ectonucleoside triphosphate diphosphohydrolase 8">
    <location>
        <begin position="1"/>
        <end position="495"/>
    </location>
</feature>
<feature type="topological domain" description="Cytoplasmic" evidence="3">
    <location>
        <begin position="1"/>
        <end position="8"/>
    </location>
</feature>
<feature type="transmembrane region" description="Helical" evidence="3">
    <location>
        <begin position="9"/>
        <end position="29"/>
    </location>
</feature>
<feature type="topological domain" description="Extracellular" evidence="3">
    <location>
        <begin position="30"/>
        <end position="466"/>
    </location>
</feature>
<feature type="transmembrane region" description="Helical" evidence="3">
    <location>
        <begin position="467"/>
        <end position="487"/>
    </location>
</feature>
<feature type="topological domain" description="Cytoplasmic" evidence="3">
    <location>
        <begin position="488"/>
        <end position="495"/>
    </location>
</feature>
<feature type="active site" description="Proton acceptor" evidence="2">
    <location>
        <position position="168"/>
    </location>
</feature>
<feature type="glycosylation site" description="N-linked (GlcNAc...) asparagine" evidence="3">
    <location>
        <position position="303"/>
    </location>
</feature>
<feature type="glycosylation site" description="N-linked (GlcNAc...) asparagine" evidence="3">
    <location>
        <position position="324"/>
    </location>
</feature>
<feature type="disulfide bond" evidence="1">
    <location>
        <begin position="78"/>
        <end position="102"/>
    </location>
</feature>
<feature type="disulfide bond" evidence="1">
    <location>
        <begin position="246"/>
        <end position="292"/>
    </location>
</feature>
<feature type="disulfide bond" evidence="1">
    <location>
        <begin position="328"/>
        <end position="334"/>
    </location>
</feature>
<feature type="disulfide bond" evidence="1">
    <location>
        <begin position="380"/>
        <end position="403"/>
    </location>
</feature>
<keyword id="KW-0067">ATP-binding</keyword>
<keyword id="KW-0106">Calcium</keyword>
<keyword id="KW-1003">Cell membrane</keyword>
<keyword id="KW-1015">Disulfide bond</keyword>
<keyword id="KW-0325">Glycoprotein</keyword>
<keyword id="KW-0378">Hydrolase</keyword>
<keyword id="KW-0460">Magnesium</keyword>
<keyword id="KW-0472">Membrane</keyword>
<keyword id="KW-0479">Metal-binding</keyword>
<keyword id="KW-0547">Nucleotide-binding</keyword>
<keyword id="KW-1185">Reference proteome</keyword>
<keyword id="KW-0812">Transmembrane</keyword>
<keyword id="KW-1133">Transmembrane helix</keyword>
<accession>A0JND9</accession>
<sequence length="495" mass="53240">MGLTWKQRVFTALLGAAAVSGLTALLLVLVGTMNVLLPPDTKFGIVFDAGSSHTSLFVYQWPANKENDTGIVSQALACQAEGPGISSYASNPARVGESLQGCLEEALALIPKAKHHETPMFLGATAGMRLLSRKNRSQAEDVFAAVSRALGQSPVDFRGAELLTGQDEGAFGWITINYILGLLVKYSFSGEWIRPLEETLVGALDMGGASTQITFVPGGPILDKTAQATFRLYGADHTVYTHSYLCFGRDQALSRVLAELVQASTGLLIRHPCYHSGYRGTLALASLYESPCAPAAPPDLSQNLTVEGTGNPGACVEALRKLFNFSSCDGREDCAFAGVYQPPVQGQFYAFSNFYYTFNFLNLTSKPSLSGANATIWEFCLRPWKLVEASAPPGQDRWLRDYCASGLYILTLLVEGYGFSEETWGGIEFRQQAGGADIGWTLGYMLNLTNLIPAEAPAQGWAQSFGVWAAGVVFVVLTLAATLGAVAVQVFWLQD</sequence>
<name>ENTP8_BOVIN</name>
<protein>
    <recommendedName>
        <fullName>Ectonucleoside triphosphate diphosphohydrolase 8</fullName>
        <shortName>E-NTPDase 8</shortName>
        <shortName>NTPDase 8</shortName>
        <shortName>NTPDase8</shortName>
        <ecNumber>3.6.1.5</ecNumber>
    </recommendedName>
</protein>
<reference key="1">
    <citation type="submission" date="2006-10" db="EMBL/GenBank/DDBJ databases">
        <authorList>
            <consortium name="NIH - Mammalian Gene Collection (MGC) project"/>
        </authorList>
    </citation>
    <scope>NUCLEOTIDE SEQUENCE [LARGE SCALE MRNA]</scope>
    <source>
        <strain>Crossbred X Angus</strain>
        <tissue>Ileum</tissue>
    </source>
</reference>
<dbReference type="EC" id="3.6.1.5"/>
<dbReference type="EMBL" id="BC126637">
    <property type="protein sequence ID" value="AAI26638.1"/>
    <property type="molecule type" value="mRNA"/>
</dbReference>
<dbReference type="RefSeq" id="NP_001071395.1">
    <property type="nucleotide sequence ID" value="NM_001077927.2"/>
</dbReference>
<dbReference type="SMR" id="A0JND9"/>
<dbReference type="FunCoup" id="A0JND9">
    <property type="interactions" value="132"/>
</dbReference>
<dbReference type="STRING" id="9913.ENSBTAP00000016080"/>
<dbReference type="GlyCosmos" id="A0JND9">
    <property type="glycosylation" value="2 sites, No reported glycans"/>
</dbReference>
<dbReference type="GlyGen" id="A0JND9">
    <property type="glycosylation" value="2 sites"/>
</dbReference>
<dbReference type="PaxDb" id="9913-ENSBTAP00000016080"/>
<dbReference type="GeneID" id="515532"/>
<dbReference type="KEGG" id="bta:515532"/>
<dbReference type="CTD" id="377841"/>
<dbReference type="eggNOG" id="KOG1386">
    <property type="taxonomic scope" value="Eukaryota"/>
</dbReference>
<dbReference type="InParanoid" id="A0JND9"/>
<dbReference type="OrthoDB" id="6372431at2759"/>
<dbReference type="Proteomes" id="UP000009136">
    <property type="component" value="Unplaced"/>
</dbReference>
<dbReference type="GO" id="GO:0005886">
    <property type="term" value="C:plasma membrane"/>
    <property type="evidence" value="ECO:0000318"/>
    <property type="project" value="GO_Central"/>
</dbReference>
<dbReference type="GO" id="GO:0004050">
    <property type="term" value="F:apyrase activity"/>
    <property type="evidence" value="ECO:0007669"/>
    <property type="project" value="UniProtKB-EC"/>
</dbReference>
<dbReference type="GO" id="GO:0005524">
    <property type="term" value="F:ATP binding"/>
    <property type="evidence" value="ECO:0007669"/>
    <property type="project" value="UniProtKB-KW"/>
</dbReference>
<dbReference type="GO" id="GO:0004382">
    <property type="term" value="F:GDP phosphatase activity"/>
    <property type="evidence" value="ECO:0000318"/>
    <property type="project" value="GO_Central"/>
</dbReference>
<dbReference type="GO" id="GO:0046872">
    <property type="term" value="F:metal ion binding"/>
    <property type="evidence" value="ECO:0007669"/>
    <property type="project" value="UniProtKB-KW"/>
</dbReference>
<dbReference type="GO" id="GO:0017111">
    <property type="term" value="F:ribonucleoside triphosphate phosphatase activity"/>
    <property type="evidence" value="ECO:0000318"/>
    <property type="project" value="GO_Central"/>
</dbReference>
<dbReference type="GO" id="GO:0045134">
    <property type="term" value="F:UDP phosphatase activity"/>
    <property type="evidence" value="ECO:0000318"/>
    <property type="project" value="GO_Central"/>
</dbReference>
<dbReference type="GO" id="GO:0009134">
    <property type="term" value="P:nucleoside diphosphate catabolic process"/>
    <property type="evidence" value="ECO:0000318"/>
    <property type="project" value="GO_Central"/>
</dbReference>
<dbReference type="FunFam" id="3.30.420.150:FF:000002">
    <property type="entry name" value="Ectonucleoside triphosphate diphosphohydrolase 1"/>
    <property type="match status" value="1"/>
</dbReference>
<dbReference type="FunFam" id="3.30.420.40:FF:000068">
    <property type="entry name" value="Ectonucleoside triphosphate diphosphohydrolase 1"/>
    <property type="match status" value="1"/>
</dbReference>
<dbReference type="Gene3D" id="3.30.420.40">
    <property type="match status" value="1"/>
</dbReference>
<dbReference type="Gene3D" id="3.30.420.150">
    <property type="entry name" value="Exopolyphosphatase. Domain 2"/>
    <property type="match status" value="1"/>
</dbReference>
<dbReference type="InterPro" id="IPR000407">
    <property type="entry name" value="GDA1_CD39_NTPase"/>
</dbReference>
<dbReference type="PANTHER" id="PTHR11782">
    <property type="entry name" value="ADENOSINE/GUANOSINE DIPHOSPHATASE"/>
    <property type="match status" value="1"/>
</dbReference>
<dbReference type="PANTHER" id="PTHR11782:SF31">
    <property type="entry name" value="ECTONUCLEOSIDE TRIPHOSPHATE DIPHOSPHOHYDROLASE 8"/>
    <property type="match status" value="1"/>
</dbReference>
<dbReference type="Pfam" id="PF01150">
    <property type="entry name" value="GDA1_CD39"/>
    <property type="match status" value="1"/>
</dbReference>
<dbReference type="PROSITE" id="PS01238">
    <property type="entry name" value="GDA1_CD39_NTPASE"/>
    <property type="match status" value="1"/>
</dbReference>
<evidence type="ECO:0000250" key="1"/>
<evidence type="ECO:0000250" key="2">
    <source>
        <dbReference type="UniProtKB" id="O35795"/>
    </source>
</evidence>
<evidence type="ECO:0000255" key="3"/>
<evidence type="ECO:0000305" key="4"/>